<organism>
    <name type="scientific">Clostridium acetobutylicum (strain ATCC 824 / DSM 792 / JCM 1419 / IAM 19013 / LMG 5710 / NBRC 13948 / NRRL B-527 / VKM B-1787 / 2291 / W)</name>
    <dbReference type="NCBI Taxonomy" id="272562"/>
    <lineage>
        <taxon>Bacteria</taxon>
        <taxon>Bacillati</taxon>
        <taxon>Bacillota</taxon>
        <taxon>Clostridia</taxon>
        <taxon>Eubacteriales</taxon>
        <taxon>Clostridiaceae</taxon>
        <taxon>Clostridium</taxon>
    </lineage>
</organism>
<evidence type="ECO:0000255" key="1">
    <source>
        <dbReference type="HAMAP-Rule" id="MF_01874"/>
    </source>
</evidence>
<name>Y092_CLOAB</name>
<dbReference type="EMBL" id="AE001437">
    <property type="protein sequence ID" value="AAK78077.1"/>
    <property type="molecule type" value="Genomic_DNA"/>
</dbReference>
<dbReference type="PIR" id="B96911">
    <property type="entry name" value="B96911"/>
</dbReference>
<dbReference type="RefSeq" id="NP_346737.1">
    <property type="nucleotide sequence ID" value="NC_003030.1"/>
</dbReference>
<dbReference type="RefSeq" id="WP_010963419.1">
    <property type="nucleotide sequence ID" value="NC_003030.1"/>
</dbReference>
<dbReference type="KEGG" id="cac:CA_C0092"/>
<dbReference type="PATRIC" id="fig|272562.8.peg.275"/>
<dbReference type="eggNOG" id="COG2707">
    <property type="taxonomic scope" value="Bacteria"/>
</dbReference>
<dbReference type="HOGENOM" id="CLU_125889_1_0_9"/>
<dbReference type="OrthoDB" id="80306at2"/>
<dbReference type="Proteomes" id="UP000000814">
    <property type="component" value="Chromosome"/>
</dbReference>
<dbReference type="GO" id="GO:0005886">
    <property type="term" value="C:plasma membrane"/>
    <property type="evidence" value="ECO:0007669"/>
    <property type="project" value="UniProtKB-SubCell"/>
</dbReference>
<dbReference type="HAMAP" id="MF_01874">
    <property type="entry name" value="UPF0756"/>
    <property type="match status" value="1"/>
</dbReference>
<dbReference type="InterPro" id="IPR007382">
    <property type="entry name" value="UPF0756_TM"/>
</dbReference>
<dbReference type="PANTHER" id="PTHR38452">
    <property type="entry name" value="UPF0756 MEMBRANE PROTEIN YEAL"/>
    <property type="match status" value="1"/>
</dbReference>
<dbReference type="PANTHER" id="PTHR38452:SF1">
    <property type="entry name" value="UPF0756 MEMBRANE PROTEIN YEAL"/>
    <property type="match status" value="1"/>
</dbReference>
<dbReference type="Pfam" id="PF04284">
    <property type="entry name" value="DUF441"/>
    <property type="match status" value="1"/>
</dbReference>
<gene>
    <name type="ordered locus">CA_C0092</name>
</gene>
<proteinExistence type="inferred from homology"/>
<accession>Q97MU9</accession>
<comment type="subcellular location">
    <subcellularLocation>
        <location evidence="1">Cell membrane</location>
        <topology evidence="1">Multi-pass membrane protein</topology>
    </subcellularLocation>
</comment>
<comment type="similarity">
    <text evidence="1">Belongs to the UPF0756 family.</text>
</comment>
<keyword id="KW-1003">Cell membrane</keyword>
<keyword id="KW-0472">Membrane</keyword>
<keyword id="KW-1185">Reference proteome</keyword>
<keyword id="KW-0812">Transmembrane</keyword>
<keyword id="KW-1133">Transmembrane helix</keyword>
<protein>
    <recommendedName>
        <fullName evidence="1">UPF0756 membrane protein CA_C0092</fullName>
    </recommendedName>
</protein>
<sequence length="152" mass="15833">MESNIILVVILGISIVGKATSVAISVAALLILKLLGLDKYIFPYLNDKGMFWGLVLLTAAILIPIAQGNVKAIDIKNNLVSFVGITALVLSFLTTYLSGVGLRYLTVQGHSDVMPSLILGSVAAAAFLGGVPVGPLITSGILALLVKMVKKS</sequence>
<reference key="1">
    <citation type="journal article" date="2001" name="J. Bacteriol.">
        <title>Genome sequence and comparative analysis of the solvent-producing bacterium Clostridium acetobutylicum.</title>
        <authorList>
            <person name="Noelling J."/>
            <person name="Breton G."/>
            <person name="Omelchenko M.V."/>
            <person name="Makarova K.S."/>
            <person name="Zeng Q."/>
            <person name="Gibson R."/>
            <person name="Lee H.M."/>
            <person name="Dubois J."/>
            <person name="Qiu D."/>
            <person name="Hitti J."/>
            <person name="Wolf Y.I."/>
            <person name="Tatusov R.L."/>
            <person name="Sabathe F."/>
            <person name="Doucette-Stamm L.A."/>
            <person name="Soucaille P."/>
            <person name="Daly M.J."/>
            <person name="Bennett G.N."/>
            <person name="Koonin E.V."/>
            <person name="Smith D.R."/>
        </authorList>
    </citation>
    <scope>NUCLEOTIDE SEQUENCE [LARGE SCALE GENOMIC DNA]</scope>
    <source>
        <strain>ATCC 824 / DSM 792 / JCM 1419 / IAM 19013 / LMG 5710 / NBRC 13948 / NRRL B-527 / VKM B-1787 / 2291 / W</strain>
    </source>
</reference>
<feature type="chain" id="PRO_0000388842" description="UPF0756 membrane protein CA_C0092">
    <location>
        <begin position="1"/>
        <end position="152"/>
    </location>
</feature>
<feature type="transmembrane region" description="Helical" evidence="1">
    <location>
        <begin position="5"/>
        <end position="25"/>
    </location>
</feature>
<feature type="transmembrane region" description="Helical" evidence="1">
    <location>
        <begin position="50"/>
        <end position="70"/>
    </location>
</feature>
<feature type="transmembrane region" description="Helical" evidence="1">
    <location>
        <begin position="82"/>
        <end position="102"/>
    </location>
</feature>
<feature type="transmembrane region" description="Helical" evidence="1">
    <location>
        <begin position="117"/>
        <end position="137"/>
    </location>
</feature>